<proteinExistence type="evidence at protein level"/>
<reference key="1">
    <citation type="journal article" date="2007" name="J. Bacteriol.">
        <title>The complete genome sequence of the lactic acid bacterial paradigm Lactococcus lactis subsp. cremoris MG1363.</title>
        <authorList>
            <person name="Wegmann U."/>
            <person name="O'Connell-Motherway M."/>
            <person name="Zomer A."/>
            <person name="Buist G."/>
            <person name="Shearman C."/>
            <person name="Canchaya C."/>
            <person name="Ventura M."/>
            <person name="Goesmann A."/>
            <person name="Gasson M.J."/>
            <person name="Kuipers O.P."/>
            <person name="van Sinderen D."/>
            <person name="Kok J."/>
        </authorList>
    </citation>
    <scope>NUCLEOTIDE SEQUENCE [LARGE SCALE GENOMIC DNA]</scope>
    <source>
        <strain>MG1363</strain>
    </source>
</reference>
<reference key="2">
    <citation type="journal article" date="2011" name="J. Biol. Chem.">
        <title>Quaternary structure and functional unit of energy coupling factor (ECF)-type transporters.</title>
        <authorList>
            <person name="ter Beek J."/>
            <person name="Duurkens R.H."/>
            <person name="Erkens G.B."/>
            <person name="Slotboom D.J."/>
        </authorList>
    </citation>
    <scope>SUBUNIT</scope>
    <scope>SUBCELLULAR LOCATION</scope>
    <scope>TRANSPORT SUBSTRATES</scope>
    <scope>EXPRESSION IN E.COLI AND L.LACTIS</scope>
    <scope>FUNCTION</scope>
    <source>
        <strain>MG1363</strain>
    </source>
</reference>
<evidence type="ECO:0000255" key="1"/>
<evidence type="ECO:0000255" key="2">
    <source>
        <dbReference type="HAMAP-Rule" id="MF_01710"/>
    </source>
</evidence>
<evidence type="ECO:0000269" key="3">
    <source>
    </source>
</evidence>
<evidence type="ECO:0000305" key="4">
    <source>
    </source>
</evidence>
<name>ECFA2_LACLM</name>
<feature type="chain" id="PRO_0000287958" description="Energy-coupling factor transporter ATP-binding protein EcfA2">
    <location>
        <begin position="1"/>
        <end position="288"/>
    </location>
</feature>
<feature type="domain" description="ABC transporter" evidence="2">
    <location>
        <begin position="2"/>
        <end position="244"/>
    </location>
</feature>
<feature type="active site" description="Proton acceptor" evidence="1">
    <location>
        <position position="170"/>
    </location>
</feature>
<feature type="binding site" evidence="2">
    <location>
        <begin position="39"/>
        <end position="46"/>
    </location>
    <ligand>
        <name>ATP</name>
        <dbReference type="ChEBI" id="CHEBI:30616"/>
    </ligand>
</feature>
<accession>A2RI02</accession>
<dbReference type="EC" id="7.-.-.-" evidence="2"/>
<dbReference type="EMBL" id="AM406671">
    <property type="protein sequence ID" value="CAL96895.1"/>
    <property type="molecule type" value="Genomic_DNA"/>
</dbReference>
<dbReference type="RefSeq" id="WP_011834359.1">
    <property type="nucleotide sequence ID" value="NC_009004.1"/>
</dbReference>
<dbReference type="SMR" id="A2RI02"/>
<dbReference type="STRING" id="416870.llmg_0288"/>
<dbReference type="KEGG" id="llm:llmg_0288"/>
<dbReference type="eggNOG" id="COG1122">
    <property type="taxonomic scope" value="Bacteria"/>
</dbReference>
<dbReference type="HOGENOM" id="CLU_000604_1_22_9"/>
<dbReference type="OrthoDB" id="9784332at2"/>
<dbReference type="PhylomeDB" id="A2RI02"/>
<dbReference type="Proteomes" id="UP000000364">
    <property type="component" value="Chromosome"/>
</dbReference>
<dbReference type="GO" id="GO:0043190">
    <property type="term" value="C:ATP-binding cassette (ABC) transporter complex"/>
    <property type="evidence" value="ECO:0007669"/>
    <property type="project" value="TreeGrafter"/>
</dbReference>
<dbReference type="GO" id="GO:0005886">
    <property type="term" value="C:plasma membrane"/>
    <property type="evidence" value="ECO:0000314"/>
    <property type="project" value="UniProtKB"/>
</dbReference>
<dbReference type="GO" id="GO:0005524">
    <property type="term" value="F:ATP binding"/>
    <property type="evidence" value="ECO:0007669"/>
    <property type="project" value="UniProtKB-KW"/>
</dbReference>
<dbReference type="GO" id="GO:0016887">
    <property type="term" value="F:ATP hydrolysis activity"/>
    <property type="evidence" value="ECO:0007669"/>
    <property type="project" value="InterPro"/>
</dbReference>
<dbReference type="GO" id="GO:0042626">
    <property type="term" value="F:ATPase-coupled transmembrane transporter activity"/>
    <property type="evidence" value="ECO:0000314"/>
    <property type="project" value="GO_Central"/>
</dbReference>
<dbReference type="GO" id="GO:0006824">
    <property type="term" value="P:cobalt ion transport"/>
    <property type="evidence" value="ECO:0007669"/>
    <property type="project" value="UniProtKB-KW"/>
</dbReference>
<dbReference type="CDD" id="cd03225">
    <property type="entry name" value="ABC_cobalt_CbiO_domain1"/>
    <property type="match status" value="1"/>
</dbReference>
<dbReference type="FunFam" id="3.40.50.300:FF:000224">
    <property type="entry name" value="Energy-coupling factor transporter ATP-binding protein EcfA"/>
    <property type="match status" value="1"/>
</dbReference>
<dbReference type="Gene3D" id="3.40.50.300">
    <property type="entry name" value="P-loop containing nucleotide triphosphate hydrolases"/>
    <property type="match status" value="1"/>
</dbReference>
<dbReference type="InterPro" id="IPR003593">
    <property type="entry name" value="AAA+_ATPase"/>
</dbReference>
<dbReference type="InterPro" id="IPR003439">
    <property type="entry name" value="ABC_transporter-like_ATP-bd"/>
</dbReference>
<dbReference type="InterPro" id="IPR017871">
    <property type="entry name" value="ABC_transporter-like_CS"/>
</dbReference>
<dbReference type="InterPro" id="IPR015856">
    <property type="entry name" value="ABC_transpr_CbiO/EcfA_su"/>
</dbReference>
<dbReference type="InterPro" id="IPR050095">
    <property type="entry name" value="ECF_ABC_transporter_ATP-bd"/>
</dbReference>
<dbReference type="InterPro" id="IPR030946">
    <property type="entry name" value="EcfA2"/>
</dbReference>
<dbReference type="InterPro" id="IPR027417">
    <property type="entry name" value="P-loop_NTPase"/>
</dbReference>
<dbReference type="NCBIfam" id="TIGR04521">
    <property type="entry name" value="ECF_ATPase_2"/>
    <property type="match status" value="1"/>
</dbReference>
<dbReference type="NCBIfam" id="NF010155">
    <property type="entry name" value="PRK13634.1"/>
    <property type="match status" value="1"/>
</dbReference>
<dbReference type="PANTHER" id="PTHR43553:SF27">
    <property type="entry name" value="ENERGY-COUPLING FACTOR TRANSPORTER ATP-BINDING PROTEIN ECFA2"/>
    <property type="match status" value="1"/>
</dbReference>
<dbReference type="PANTHER" id="PTHR43553">
    <property type="entry name" value="HEAVY METAL TRANSPORTER"/>
    <property type="match status" value="1"/>
</dbReference>
<dbReference type="Pfam" id="PF00005">
    <property type="entry name" value="ABC_tran"/>
    <property type="match status" value="1"/>
</dbReference>
<dbReference type="SMART" id="SM00382">
    <property type="entry name" value="AAA"/>
    <property type="match status" value="1"/>
</dbReference>
<dbReference type="SUPFAM" id="SSF52540">
    <property type="entry name" value="P-loop containing nucleoside triphosphate hydrolases"/>
    <property type="match status" value="1"/>
</dbReference>
<dbReference type="PROSITE" id="PS00211">
    <property type="entry name" value="ABC_TRANSPORTER_1"/>
    <property type="match status" value="1"/>
</dbReference>
<dbReference type="PROSITE" id="PS50893">
    <property type="entry name" value="ABC_TRANSPORTER_2"/>
    <property type="match status" value="1"/>
</dbReference>
<dbReference type="PROSITE" id="PS51246">
    <property type="entry name" value="CBIO"/>
    <property type="match status" value="1"/>
</dbReference>
<comment type="function">
    <text evidence="2 3">ATP-binding (A) component of a common energy-coupling factor (ECF) ABC-transporter complex. Unlike classic ABC transporters this ECF transporter provides the energy necessary to transport a number of different substrates. In this organism these probably include biotin, thiamine precursor, niacin, pantothenic acid, queuosine precursor, riboflavin and thiamine. Uptake of niacin or riboflavin into proteosomes containing EcfA1A2T and Niax or RibU has been demonstrated. Uptake requires hydrolyzable Mg-ATP and is substrate-specific; NiaX-containing proteosomes did not transport riboflavin.</text>
</comment>
<comment type="subunit">
    <text evidence="2 3">Forms a stable energy-coupling factor (ECF) transporter complex composed of 2 membrane-embedded substrate-binding proteins (S component), 2 ATP-binding proteins (A component) and 2 transmembrane proteins (T component). In L.lactis forms a stable complex with EcfA' and EcfT and substrate-binding components. In E.coli forms a stable complex with EcfA, EcfT and individually with 3 tested substrate-binding components (BioY, NiaX and ThiT) with a stoichiometry of 1.1:1:1. The core ECF complex interacts with a number of substrate-specific binding components, including BioY, BioY2, HmpT, NiaX, PanT, QueT, RibU and ThiT.</text>
</comment>
<comment type="subcellular location">
    <subcellularLocation>
        <location evidence="4">Cell membrane</location>
        <topology evidence="4">Peripheral membrane protein</topology>
    </subcellularLocation>
</comment>
<comment type="similarity">
    <text evidence="2">Belongs to the ABC transporter superfamily. Energy-coupling factor EcfA family.</text>
</comment>
<protein>
    <recommendedName>
        <fullName evidence="2">Energy-coupling factor transporter ATP-binding protein EcfA2</fullName>
        <shortName evidence="2">ECF transporter A component EcfA2</shortName>
        <ecNumber evidence="2">7.-.-.-</ecNumber>
    </recommendedName>
    <alternativeName>
        <fullName>ECF transporter A component EcfA'</fullName>
    </alternativeName>
</protein>
<keyword id="KW-0067">ATP-binding</keyword>
<keyword id="KW-1003">Cell membrane</keyword>
<keyword id="KW-0472">Membrane</keyword>
<keyword id="KW-0547">Nucleotide-binding</keyword>
<keyword id="KW-1278">Translocase</keyword>
<keyword id="KW-0813">Transport</keyword>
<gene>
    <name evidence="2" type="primary">ecfA2</name>
    <name type="synonym">cbiO2</name>
    <name type="synonym">ecfA'</name>
    <name type="ordered locus">llmg_0288</name>
</gene>
<sequence length="288" mass="31624">MIKFEKVNYTYQPNSPFASRALFDIDLEVKKGSYTALIGHTGSGKSTLLQHLNGLLQPTEGKVTVGDIVVSSTSKQKEIKPVRKKVGVVFQFPESQLFEETVLKDVAFGPQNFGIPKEKAEKIAAEKLEMVGLADEFWEKSPFELSGGQMRRVAIAGILAMEPEVLVLDEPTAGLDPKARIEMMQLFESIHQSGQTVVLVTHLMDDVADYADYVYLLEKGHIISCGTPSDVFQEVDFLKAHELGVPKATHFADQLQKTGAVAFEKLPITRAELVTLLTSLSVNSGGEN</sequence>
<organism>
    <name type="scientific">Lactococcus lactis subsp. cremoris (strain MG1363)</name>
    <dbReference type="NCBI Taxonomy" id="416870"/>
    <lineage>
        <taxon>Bacteria</taxon>
        <taxon>Bacillati</taxon>
        <taxon>Bacillota</taxon>
        <taxon>Bacilli</taxon>
        <taxon>Lactobacillales</taxon>
        <taxon>Streptococcaceae</taxon>
        <taxon>Lactococcus</taxon>
        <taxon>Lactococcus cremoris subsp. cremoris</taxon>
    </lineage>
</organism>